<protein>
    <recommendedName>
        <fullName>Uncharacterized protein R187</fullName>
    </recommendedName>
</protein>
<organismHost>
    <name type="scientific">Acanthamoeba polyphaga</name>
    <name type="common">Amoeba</name>
    <dbReference type="NCBI Taxonomy" id="5757"/>
</organismHost>
<keyword id="KW-1185">Reference proteome</keyword>
<name>YR187_MIMIV</name>
<sequence>MQNPCNSTDVYKYALFSVKRNSDFIEFVLRSEIFSNYYNAVNQMMYMLWSFKRPDEQQSLTDNYSNKIHLPSIKNFTLELYKIIIVPFDGDYTKIKCLSYPVHGMYIGSDCIIYLIENVDPSTNCTKFPDEIFAKYVTYRYTQNCDLITLSHNIFGPNITSEEANKISTMIVSDILQSYYKGYKMYYFDNLFTELKYKCHPSDYEKFVRQFIIPKLKKQFEVQNIKGTPLLQKTLDEIYVYMISGY</sequence>
<feature type="chain" id="PRO_0000071242" description="Uncharacterized protein R187">
    <location>
        <begin position="1"/>
        <end position="246"/>
    </location>
</feature>
<accession>Q5URB3</accession>
<dbReference type="EMBL" id="AY653733">
    <property type="protein sequence ID" value="AAV50461.1"/>
    <property type="molecule type" value="Genomic_DNA"/>
</dbReference>
<dbReference type="KEGG" id="vg:9924792"/>
<dbReference type="OrthoDB" id="40050at10239"/>
<dbReference type="Proteomes" id="UP000001134">
    <property type="component" value="Genome"/>
</dbReference>
<gene>
    <name type="ordered locus">MIMI_R187</name>
</gene>
<organism>
    <name type="scientific">Acanthamoeba polyphaga mimivirus</name>
    <name type="common">APMV</name>
    <dbReference type="NCBI Taxonomy" id="212035"/>
    <lineage>
        <taxon>Viruses</taxon>
        <taxon>Varidnaviria</taxon>
        <taxon>Bamfordvirae</taxon>
        <taxon>Nucleocytoviricota</taxon>
        <taxon>Megaviricetes</taxon>
        <taxon>Imitervirales</taxon>
        <taxon>Mimiviridae</taxon>
        <taxon>Megamimivirinae</taxon>
        <taxon>Mimivirus</taxon>
        <taxon>Mimivirus bradfordmassiliense</taxon>
    </lineage>
</organism>
<proteinExistence type="predicted"/>
<reference key="1">
    <citation type="journal article" date="2004" name="Science">
        <title>The 1.2-megabase genome sequence of Mimivirus.</title>
        <authorList>
            <person name="Raoult D."/>
            <person name="Audic S."/>
            <person name="Robert C."/>
            <person name="Abergel C."/>
            <person name="Renesto P."/>
            <person name="Ogata H."/>
            <person name="La Scola B."/>
            <person name="Susan M."/>
            <person name="Claverie J.-M."/>
        </authorList>
    </citation>
    <scope>NUCLEOTIDE SEQUENCE [LARGE SCALE GENOMIC DNA]</scope>
    <source>
        <strain>Rowbotham-Bradford</strain>
    </source>
</reference>